<feature type="chain" id="PRO_0000367284" description="E3 ubiquitin-protein ligase rnf168">
    <location>
        <begin position="1"/>
        <end position="557"/>
    </location>
</feature>
<feature type="zinc finger region" description="RING-type" evidence="1">
    <location>
        <begin position="16"/>
        <end position="55"/>
    </location>
</feature>
<feature type="region of interest" description="Disordered" evidence="2">
    <location>
        <begin position="482"/>
        <end position="543"/>
    </location>
</feature>
<feature type="short sequence motif" description="LR motif 1" evidence="1">
    <location>
        <begin position="112"/>
        <end position="130"/>
    </location>
</feature>
<feature type="short sequence motif" description="UMI motif" evidence="1">
    <location>
        <begin position="145"/>
        <end position="153"/>
    </location>
</feature>
<feature type="short sequence motif" description="MIU motif 1" evidence="1">
    <location>
        <begin position="170"/>
        <end position="193"/>
    </location>
</feature>
<feature type="short sequence motif" description="MIU motif 2" evidence="1">
    <location>
        <begin position="422"/>
        <end position="445"/>
    </location>
</feature>
<feature type="short sequence motif" description="LR motif 2" evidence="1">
    <location>
        <begin position="449"/>
        <end position="460"/>
    </location>
</feature>
<feature type="compositionally biased region" description="Polar residues" evidence="2">
    <location>
        <begin position="490"/>
        <end position="500"/>
    </location>
</feature>
<feature type="compositionally biased region" description="Basic residues" evidence="2">
    <location>
        <begin position="508"/>
        <end position="521"/>
    </location>
</feature>
<gene>
    <name evidence="1" type="primary">rnf168</name>
</gene>
<organism>
    <name type="scientific">Xenopus laevis</name>
    <name type="common">African clawed frog</name>
    <dbReference type="NCBI Taxonomy" id="8355"/>
    <lineage>
        <taxon>Eukaryota</taxon>
        <taxon>Metazoa</taxon>
        <taxon>Chordata</taxon>
        <taxon>Craniata</taxon>
        <taxon>Vertebrata</taxon>
        <taxon>Euteleostomi</taxon>
        <taxon>Amphibia</taxon>
        <taxon>Batrachia</taxon>
        <taxon>Anura</taxon>
        <taxon>Pipoidea</taxon>
        <taxon>Pipidae</taxon>
        <taxon>Xenopodinae</taxon>
        <taxon>Xenopus</taxon>
        <taxon>Xenopus</taxon>
    </lineage>
</organism>
<reference key="1">
    <citation type="submission" date="2004-06" db="EMBL/GenBank/DDBJ databases">
        <authorList>
            <consortium name="NIH - Xenopus Gene Collection (XGC) project"/>
        </authorList>
    </citation>
    <scope>NUCLEOTIDE SEQUENCE [LARGE SCALE MRNA]</scope>
    <source>
        <tissue>Ovary</tissue>
    </source>
</reference>
<dbReference type="EC" id="2.3.2.27" evidence="1"/>
<dbReference type="EMBL" id="BC072198">
    <property type="protein sequence ID" value="AAH72198.1"/>
    <property type="molecule type" value="mRNA"/>
</dbReference>
<dbReference type="RefSeq" id="NP_001085123.1">
    <property type="nucleotide sequence ID" value="NM_001091654.1"/>
</dbReference>
<dbReference type="SMR" id="Q6INS5"/>
<dbReference type="DNASU" id="432198"/>
<dbReference type="GeneID" id="432198"/>
<dbReference type="KEGG" id="xla:432198"/>
<dbReference type="AGR" id="Xenbase:XB-GENE-5765277"/>
<dbReference type="CTD" id="432198"/>
<dbReference type="Xenbase" id="XB-GENE-5765277">
    <property type="gene designation" value="rnf168.L"/>
</dbReference>
<dbReference type="OrthoDB" id="426657at2759"/>
<dbReference type="UniPathway" id="UPA00143"/>
<dbReference type="Proteomes" id="UP000186698">
    <property type="component" value="Chromosome 5L"/>
</dbReference>
<dbReference type="Bgee" id="432198">
    <property type="expression patterns" value="Expressed in ovary and 19 other cell types or tissues"/>
</dbReference>
<dbReference type="GO" id="GO:0005634">
    <property type="term" value="C:nucleus"/>
    <property type="evidence" value="ECO:0000250"/>
    <property type="project" value="UniProtKB"/>
</dbReference>
<dbReference type="GO" id="GO:0035861">
    <property type="term" value="C:site of double-strand break"/>
    <property type="evidence" value="ECO:0000250"/>
    <property type="project" value="UniProtKB"/>
</dbReference>
<dbReference type="GO" id="GO:0000151">
    <property type="term" value="C:ubiquitin ligase complex"/>
    <property type="evidence" value="ECO:0000250"/>
    <property type="project" value="UniProtKB"/>
</dbReference>
<dbReference type="GO" id="GO:0003682">
    <property type="term" value="F:chromatin binding"/>
    <property type="evidence" value="ECO:0000250"/>
    <property type="project" value="UniProtKB"/>
</dbReference>
<dbReference type="GO" id="GO:0042393">
    <property type="term" value="F:histone binding"/>
    <property type="evidence" value="ECO:0000250"/>
    <property type="project" value="UniProtKB"/>
</dbReference>
<dbReference type="GO" id="GO:0070530">
    <property type="term" value="F:K63-linked polyubiquitin modification-dependent protein binding"/>
    <property type="evidence" value="ECO:0000250"/>
    <property type="project" value="UniProtKB"/>
</dbReference>
<dbReference type="GO" id="GO:0031491">
    <property type="term" value="F:nucleosome binding"/>
    <property type="evidence" value="ECO:0000318"/>
    <property type="project" value="GO_Central"/>
</dbReference>
<dbReference type="GO" id="GO:0043130">
    <property type="term" value="F:ubiquitin binding"/>
    <property type="evidence" value="ECO:0000250"/>
    <property type="project" value="UniProtKB"/>
</dbReference>
<dbReference type="GO" id="GO:0004842">
    <property type="term" value="F:ubiquitin-protein transferase activity"/>
    <property type="evidence" value="ECO:0000250"/>
    <property type="project" value="UniProtKB"/>
</dbReference>
<dbReference type="GO" id="GO:0008270">
    <property type="term" value="F:zinc ion binding"/>
    <property type="evidence" value="ECO:0007669"/>
    <property type="project" value="UniProtKB-KW"/>
</dbReference>
<dbReference type="GO" id="GO:0006974">
    <property type="term" value="P:DNA damage response"/>
    <property type="evidence" value="ECO:0000250"/>
    <property type="project" value="UniProtKB"/>
</dbReference>
<dbReference type="GO" id="GO:0140861">
    <property type="term" value="P:DNA repair-dependent chromatin remodeling"/>
    <property type="evidence" value="ECO:0000250"/>
    <property type="project" value="UniProtKB"/>
</dbReference>
<dbReference type="GO" id="GO:0006302">
    <property type="term" value="P:double-strand break repair"/>
    <property type="evidence" value="ECO:0000250"/>
    <property type="project" value="UniProtKB"/>
</dbReference>
<dbReference type="GO" id="GO:0045190">
    <property type="term" value="P:isotype switching"/>
    <property type="evidence" value="ECO:0000250"/>
    <property type="project" value="UniProtKB"/>
</dbReference>
<dbReference type="GO" id="GO:0034244">
    <property type="term" value="P:negative regulation of transcription elongation by RNA polymerase II"/>
    <property type="evidence" value="ECO:0000250"/>
    <property type="project" value="UniProtKB"/>
</dbReference>
<dbReference type="GO" id="GO:0045739">
    <property type="term" value="P:positive regulation of DNA repair"/>
    <property type="evidence" value="ECO:0000250"/>
    <property type="project" value="UniProtKB"/>
</dbReference>
<dbReference type="GO" id="GO:0070534">
    <property type="term" value="P:protein K63-linked ubiquitination"/>
    <property type="evidence" value="ECO:0000250"/>
    <property type="project" value="UniProtKB"/>
</dbReference>
<dbReference type="GO" id="GO:0016567">
    <property type="term" value="P:protein ubiquitination"/>
    <property type="evidence" value="ECO:0000250"/>
    <property type="project" value="UniProtKB"/>
</dbReference>
<dbReference type="GO" id="GO:0010212">
    <property type="term" value="P:response to ionizing radiation"/>
    <property type="evidence" value="ECO:0000250"/>
    <property type="project" value="UniProtKB"/>
</dbReference>
<dbReference type="GO" id="GO:0006511">
    <property type="term" value="P:ubiquitin-dependent protein catabolic process"/>
    <property type="evidence" value="ECO:0000250"/>
    <property type="project" value="UniProtKB"/>
</dbReference>
<dbReference type="CDD" id="cd21952">
    <property type="entry name" value="MIU2_RNF168"/>
    <property type="match status" value="1"/>
</dbReference>
<dbReference type="CDD" id="cd16550">
    <property type="entry name" value="RING-HC_RNF168"/>
    <property type="match status" value="1"/>
</dbReference>
<dbReference type="CDD" id="cd22265">
    <property type="entry name" value="UDM1_RNF168"/>
    <property type="match status" value="1"/>
</dbReference>
<dbReference type="FunFam" id="3.30.40.10:FF:000466">
    <property type="entry name" value="E3 ubiquitin-protein ligase RNF168"/>
    <property type="match status" value="1"/>
</dbReference>
<dbReference type="Gene3D" id="3.30.40.10">
    <property type="entry name" value="Zinc/RING finger domain, C3HC4 (zinc finger)"/>
    <property type="match status" value="1"/>
</dbReference>
<dbReference type="HAMAP" id="MF_03066">
    <property type="entry name" value="RNF168"/>
    <property type="match status" value="1"/>
</dbReference>
<dbReference type="InterPro" id="IPR034725">
    <property type="entry name" value="RNF168"/>
</dbReference>
<dbReference type="InterPro" id="IPR051657">
    <property type="entry name" value="RNF168/RNF169_E3_ubiq-ligase"/>
</dbReference>
<dbReference type="InterPro" id="IPR018957">
    <property type="entry name" value="Znf_C3HC4_RING-type"/>
</dbReference>
<dbReference type="InterPro" id="IPR001841">
    <property type="entry name" value="Znf_RING"/>
</dbReference>
<dbReference type="InterPro" id="IPR013083">
    <property type="entry name" value="Znf_RING/FYVE/PHD"/>
</dbReference>
<dbReference type="PANTHER" id="PTHR23328:SF1">
    <property type="entry name" value="E3 UBIQUITIN-PROTEIN LIGASE RNF168"/>
    <property type="match status" value="1"/>
</dbReference>
<dbReference type="PANTHER" id="PTHR23328">
    <property type="entry name" value="RING-TYPE DOMAIN-CONTAINING PROTEIN"/>
    <property type="match status" value="1"/>
</dbReference>
<dbReference type="Pfam" id="PF00097">
    <property type="entry name" value="zf-C3HC4"/>
    <property type="match status" value="1"/>
</dbReference>
<dbReference type="SMART" id="SM00184">
    <property type="entry name" value="RING"/>
    <property type="match status" value="1"/>
</dbReference>
<dbReference type="SUPFAM" id="SSF57850">
    <property type="entry name" value="RING/U-box"/>
    <property type="match status" value="1"/>
</dbReference>
<dbReference type="PROSITE" id="PS50089">
    <property type="entry name" value="ZF_RING_2"/>
    <property type="match status" value="1"/>
</dbReference>
<sequence>MTKEKTLPLPRSECICPICQEILLEPVTLPCKHTLCNPCFQMTVEKASLCCPFCRKRVSTWARLHSRTRTLVNTELWERIQKQYPKECQRRASGQESDDLADELASCPAPLLCQPGEIRQEYEAEVSKIEAERLAQEEAERKASEDYIQKLLAEEAAQDRLHSEAVQREMEEQLKIDEELARTLSVDLDVSNASCSSVSSVTSKKVVVSKSSKNVKNKQRVSGDIERFLTPRAVAVVGIDESMNSDSSECFIVFDEGEDEMPELSPQCPSTSLIQERGVELIMPYLSDCYKVESNTTSQQDRCSERSQVCNGTYSSCSDSIDMEESMAIKKQSTTAGLFPERGYHSPENGMESNTMNCSTPKHLGMTGTLKRKCEDCSIDLEEKAGSCRNVKKKKLSLTEDCPVPSVHAGKLIELEENLYERRRQEEQDRLLALQLQRELDKELKQVNRGKGSPDEYELRTKRGLKLQECLKLQECQDSPLPLRKEIPVQDNSRNTQSEYSPDENKKPSRKNSVRSARVRQSRAVANTEGSSDGINVLKPINKQPTILDLFQRSAGK</sequence>
<comment type="function">
    <text evidence="1">E3 ubiquitin-protein ligase required for accumulation of repair proteins to sites of DNA damage. Acts with ube2n/ubc13 to amplify the rnf8-dependent histone ubiquitination. Recruited to sites of DNA damage at double-strand breaks (DSBs) by binding to ubiquitinated histone H2A and ubiquitinates histone H2A and H2AX, leading to amplify the rnf8-dependent H2A ubiquitination and promoting the formation of 'Lys-63'-linked ubiquitin conjugates. This leads to concentrate ubiquitinated histones H2A and H2AX at DNA lesions to the threshold required for recruitment of tp53bp1 and brca1. Catalyzes monoubiquitination of 'Lys-13' and 'Lys-15' of nucleosomal histone H2A (H2AK13Ub and H2AK15Ub, respectively).</text>
</comment>
<comment type="catalytic activity">
    <reaction evidence="1">
        <text>S-ubiquitinyl-[E2 ubiquitin-conjugating enzyme]-L-cysteine + [acceptor protein]-L-lysine = [E2 ubiquitin-conjugating enzyme]-L-cysteine + N(6)-ubiquitinyl-[acceptor protein]-L-lysine.</text>
        <dbReference type="EC" id="2.3.2.27"/>
    </reaction>
</comment>
<comment type="pathway">
    <text evidence="1">Protein modification; protein ubiquitination.</text>
</comment>
<comment type="subunit">
    <text evidence="1">Monomer.</text>
</comment>
<comment type="subcellular location">
    <subcellularLocation>
        <location evidence="1">Nucleus</location>
    </subcellularLocation>
    <text evidence="1">Localizes to double-strand breaks (DSBs) sites of DNA damage.</text>
</comment>
<comment type="domain">
    <text evidence="1">The MIU motif (motif interacting with ubiquitin) mediates the interaction with both 'Lys-48'- and 'Lys-63'-linked ubiquitin chains. The UMI motif mediates interaction with ubiquitin with a preference for 'Lys-63'-linked ubiquitin. The specificity for different types of ubiquitin is mediated by juxtaposition of ubiquitin-binding motifs (MIU and UMI motifs) with LR motifs (LRMs).</text>
</comment>
<comment type="similarity">
    <text evidence="1">Belongs to the RNF168 family.</text>
</comment>
<keyword id="KW-0156">Chromatin regulator</keyword>
<keyword id="KW-0227">DNA damage</keyword>
<keyword id="KW-0234">DNA repair</keyword>
<keyword id="KW-0479">Metal-binding</keyword>
<keyword id="KW-0539">Nucleus</keyword>
<keyword id="KW-1185">Reference proteome</keyword>
<keyword id="KW-0808">Transferase</keyword>
<keyword id="KW-0833">Ubl conjugation pathway</keyword>
<keyword id="KW-0862">Zinc</keyword>
<keyword id="KW-0863">Zinc-finger</keyword>
<evidence type="ECO:0000255" key="1">
    <source>
        <dbReference type="HAMAP-Rule" id="MF_03066"/>
    </source>
</evidence>
<evidence type="ECO:0000256" key="2">
    <source>
        <dbReference type="SAM" id="MobiDB-lite"/>
    </source>
</evidence>
<name>RN168_XENLA</name>
<protein>
    <recommendedName>
        <fullName evidence="1">E3 ubiquitin-protein ligase rnf168</fullName>
        <ecNumber evidence="1">2.3.2.27</ecNumber>
    </recommendedName>
    <alternativeName>
        <fullName evidence="1">RING finger protein 168</fullName>
    </alternativeName>
    <alternativeName>
        <fullName>RING-type E3 ubiquitin transferase rnf168</fullName>
    </alternativeName>
</protein>
<accession>Q6INS5</accession>
<proteinExistence type="evidence at transcript level"/>